<sequence length="243" mass="27771">MARKGPKRHLKRLAAPTSWYIHRKAYKWAVRPSPGPHSMKTSIPLIYIVRDYLGYAKTAREARKILNEGKILVDGRVRKDYKFPVGIMDVVSIPETGEHYRVLPNRIGKLILHPISEEEAKLKPFRINNKRMVKGAKVQLNLHDGSNHLVSLAEKDAYKTSYTVIMQVPERQIVKVLPFEVGAYVFVTQGKNVARKGKIVEVRQFPMGWPDVVTIEDENGELFDTLKEYAFVIGKDKPEISLP</sequence>
<name>RS4E_THEKO</name>
<comment type="subunit">
    <text evidence="2">Part of the 30S ribosomal subunit.</text>
</comment>
<comment type="similarity">
    <text evidence="1">Belongs to the eukaryotic ribosomal protein eS4 family.</text>
</comment>
<reference key="1">
    <citation type="journal article" date="2005" name="Genome Res.">
        <title>Complete genome sequence of the hyperthermophilic archaeon Thermococcus kodakaraensis KOD1 and comparison with Pyrococcus genomes.</title>
        <authorList>
            <person name="Fukui T."/>
            <person name="Atomi H."/>
            <person name="Kanai T."/>
            <person name="Matsumi R."/>
            <person name="Fujiwara S."/>
            <person name="Imanaka T."/>
        </authorList>
    </citation>
    <scope>NUCLEOTIDE SEQUENCE [LARGE SCALE GENOMIC DNA]</scope>
    <source>
        <strain>ATCC BAA-918 / JCM 12380 / KOD1</strain>
    </source>
</reference>
<reference evidence="4 5 6" key="2">
    <citation type="journal article" date="2020" name="Nature">
        <title>Dynamic RNA acetylation revealed by quantitative cross-evolutionary mapping.</title>
        <authorList>
            <person name="Sas-Chen A."/>
            <person name="Thomas J.M."/>
            <person name="Matzov D."/>
            <person name="Taoka M."/>
            <person name="Nance K.D."/>
            <person name="Nir R."/>
            <person name="Bryson K.M."/>
            <person name="Shachar R."/>
            <person name="Liman G.L.S."/>
            <person name="Burkhart B.W."/>
            <person name="Gamage S.T."/>
            <person name="Nobe Y."/>
            <person name="Briney C.A."/>
            <person name="Levy M.J."/>
            <person name="Fuchs R.T."/>
            <person name="Robb G.B."/>
            <person name="Hartmann J."/>
            <person name="Sharma S."/>
            <person name="Lin Q."/>
            <person name="Florens L."/>
            <person name="Washburn M.P."/>
            <person name="Isobe T."/>
            <person name="Santangelo T.J."/>
            <person name="Shalev-Benami M."/>
            <person name="Meier J.L."/>
            <person name="Schwartz S."/>
        </authorList>
    </citation>
    <scope>STRUCTURE BY ELECTRON MICROSCOPY (2.55 ANGSTROMS) IN 70S RIBOSOME</scope>
    <scope>SUBUNIT</scope>
    <source>
        <strain>ATCC BAA-918 / TS559</strain>
    </source>
</reference>
<protein>
    <recommendedName>
        <fullName evidence="1">Small ribosomal subunit protein eS4</fullName>
    </recommendedName>
    <alternativeName>
        <fullName evidence="3">30S ribosomal protein S4e</fullName>
    </alternativeName>
</protein>
<proteinExistence type="evidence at protein level"/>
<evidence type="ECO:0000255" key="1">
    <source>
        <dbReference type="HAMAP-Rule" id="MF_00485"/>
    </source>
</evidence>
<evidence type="ECO:0000269" key="2">
    <source>
    </source>
</evidence>
<evidence type="ECO:0000305" key="3"/>
<evidence type="ECO:0007744" key="4">
    <source>
        <dbReference type="PDB" id="6SKF"/>
    </source>
</evidence>
<evidence type="ECO:0007744" key="5">
    <source>
        <dbReference type="PDB" id="6SKG"/>
    </source>
</evidence>
<evidence type="ECO:0007744" key="6">
    <source>
        <dbReference type="PDB" id="6TH6"/>
    </source>
</evidence>
<feature type="chain" id="PRO_0000130861" description="Small ribosomal subunit protein eS4">
    <location>
        <begin position="1"/>
        <end position="243"/>
    </location>
</feature>
<feature type="domain" description="S4 RNA-binding" evidence="1">
    <location>
        <begin position="43"/>
        <end position="105"/>
    </location>
</feature>
<keyword id="KW-0002">3D-structure</keyword>
<keyword id="KW-1185">Reference proteome</keyword>
<keyword id="KW-0687">Ribonucleoprotein</keyword>
<keyword id="KW-0689">Ribosomal protein</keyword>
<keyword id="KW-0694">RNA-binding</keyword>
<keyword id="KW-0699">rRNA-binding</keyword>
<accession>Q5JJG0</accession>
<gene>
    <name evidence="1" type="primary">rps4e</name>
    <name type="ordered locus">TK1529</name>
</gene>
<dbReference type="EMBL" id="AP006878">
    <property type="protein sequence ID" value="BAD85718.1"/>
    <property type="molecule type" value="Genomic_DNA"/>
</dbReference>
<dbReference type="RefSeq" id="WP_011250480.1">
    <property type="nucleotide sequence ID" value="NC_006624.1"/>
</dbReference>
<dbReference type="PDB" id="6SKF">
    <property type="method" value="EM"/>
    <property type="resolution" value="2.95 A"/>
    <property type="chains" value="Af=1-243"/>
</dbReference>
<dbReference type="PDB" id="6SKG">
    <property type="method" value="EM"/>
    <property type="resolution" value="2.65 A"/>
    <property type="chains" value="Af=1-243"/>
</dbReference>
<dbReference type="PDB" id="6TH6">
    <property type="method" value="EM"/>
    <property type="resolution" value="2.55 A"/>
    <property type="chains" value="Af=1-243"/>
</dbReference>
<dbReference type="PDBsum" id="6SKF"/>
<dbReference type="PDBsum" id="6SKG"/>
<dbReference type="PDBsum" id="6TH6"/>
<dbReference type="EMDB" id="EMD-10223"/>
<dbReference type="EMDB" id="EMD-10224"/>
<dbReference type="EMDB" id="EMD-10503"/>
<dbReference type="SMR" id="Q5JJG0"/>
<dbReference type="FunCoup" id="Q5JJG0">
    <property type="interactions" value="142"/>
</dbReference>
<dbReference type="IntAct" id="Q5JJG0">
    <property type="interactions" value="1"/>
</dbReference>
<dbReference type="MINT" id="Q5JJG0"/>
<dbReference type="STRING" id="69014.TK1529"/>
<dbReference type="EnsemblBacteria" id="BAD85718">
    <property type="protein sequence ID" value="BAD85718"/>
    <property type="gene ID" value="TK1529"/>
</dbReference>
<dbReference type="GeneID" id="78448057"/>
<dbReference type="KEGG" id="tko:TK1529"/>
<dbReference type="PATRIC" id="fig|69014.16.peg.1489"/>
<dbReference type="eggNOG" id="arCOG04093">
    <property type="taxonomic scope" value="Archaea"/>
</dbReference>
<dbReference type="HOGENOM" id="CLU_060400_0_0_2"/>
<dbReference type="InParanoid" id="Q5JJG0"/>
<dbReference type="OrthoDB" id="372073at2157"/>
<dbReference type="PhylomeDB" id="Q5JJG0"/>
<dbReference type="Proteomes" id="UP000000536">
    <property type="component" value="Chromosome"/>
</dbReference>
<dbReference type="GO" id="GO:0022627">
    <property type="term" value="C:cytosolic small ribosomal subunit"/>
    <property type="evidence" value="ECO:0000318"/>
    <property type="project" value="GO_Central"/>
</dbReference>
<dbReference type="GO" id="GO:0003723">
    <property type="term" value="F:RNA binding"/>
    <property type="evidence" value="ECO:0000318"/>
    <property type="project" value="GO_Central"/>
</dbReference>
<dbReference type="GO" id="GO:0019843">
    <property type="term" value="F:rRNA binding"/>
    <property type="evidence" value="ECO:0007669"/>
    <property type="project" value="UniProtKB-KW"/>
</dbReference>
<dbReference type="GO" id="GO:0003735">
    <property type="term" value="F:structural constituent of ribosome"/>
    <property type="evidence" value="ECO:0000318"/>
    <property type="project" value="GO_Central"/>
</dbReference>
<dbReference type="GO" id="GO:0006412">
    <property type="term" value="P:translation"/>
    <property type="evidence" value="ECO:0000318"/>
    <property type="project" value="GO_Central"/>
</dbReference>
<dbReference type="CDD" id="cd06087">
    <property type="entry name" value="KOW_RPS4"/>
    <property type="match status" value="1"/>
</dbReference>
<dbReference type="CDD" id="cd00165">
    <property type="entry name" value="S4"/>
    <property type="match status" value="1"/>
</dbReference>
<dbReference type="FunFam" id="2.30.30.30:FF:000090">
    <property type="entry name" value="30S ribosomal protein S4e"/>
    <property type="match status" value="1"/>
</dbReference>
<dbReference type="FunFam" id="2.40.50.740:FF:000002">
    <property type="entry name" value="30S ribosomal protein S4e"/>
    <property type="match status" value="1"/>
</dbReference>
<dbReference type="FunFam" id="3.10.290.10:FF:000002">
    <property type="entry name" value="40S ribosomal protein S4"/>
    <property type="match status" value="1"/>
</dbReference>
<dbReference type="Gene3D" id="2.30.30.30">
    <property type="match status" value="1"/>
</dbReference>
<dbReference type="Gene3D" id="2.40.50.740">
    <property type="match status" value="1"/>
</dbReference>
<dbReference type="Gene3D" id="3.10.290.10">
    <property type="entry name" value="RNA-binding S4 domain"/>
    <property type="match status" value="1"/>
</dbReference>
<dbReference type="HAMAP" id="MF_00485">
    <property type="entry name" value="Ribosomal_eS4"/>
    <property type="match status" value="1"/>
</dbReference>
<dbReference type="InterPro" id="IPR014722">
    <property type="entry name" value="Rib_uL2_dom2"/>
</dbReference>
<dbReference type="InterPro" id="IPR000876">
    <property type="entry name" value="Ribosomal_eS4"/>
</dbReference>
<dbReference type="InterPro" id="IPR013845">
    <property type="entry name" value="Ribosomal_eS4_central_region"/>
</dbReference>
<dbReference type="InterPro" id="IPR038237">
    <property type="entry name" value="Ribosomal_eS4_central_sf"/>
</dbReference>
<dbReference type="InterPro" id="IPR041982">
    <property type="entry name" value="Ribosomal_eS4_KOW"/>
</dbReference>
<dbReference type="InterPro" id="IPR013843">
    <property type="entry name" value="Ribosomal_eS4_N"/>
</dbReference>
<dbReference type="InterPro" id="IPR018199">
    <property type="entry name" value="Ribosomal_eS4_N_CS"/>
</dbReference>
<dbReference type="InterPro" id="IPR002942">
    <property type="entry name" value="S4_RNA-bd"/>
</dbReference>
<dbReference type="InterPro" id="IPR036986">
    <property type="entry name" value="S4_RNA-bd_sf"/>
</dbReference>
<dbReference type="NCBIfam" id="NF003312">
    <property type="entry name" value="PRK04313.1"/>
    <property type="match status" value="1"/>
</dbReference>
<dbReference type="PANTHER" id="PTHR11581">
    <property type="entry name" value="30S/40S RIBOSOMAL PROTEIN S4"/>
    <property type="match status" value="1"/>
</dbReference>
<dbReference type="PANTHER" id="PTHR11581:SF0">
    <property type="entry name" value="SMALL RIBOSOMAL SUBUNIT PROTEIN ES4"/>
    <property type="match status" value="1"/>
</dbReference>
<dbReference type="Pfam" id="PF00900">
    <property type="entry name" value="Ribosomal_S4e"/>
    <property type="match status" value="1"/>
</dbReference>
<dbReference type="Pfam" id="PF08071">
    <property type="entry name" value="RS4NT"/>
    <property type="match status" value="1"/>
</dbReference>
<dbReference type="Pfam" id="PF01479">
    <property type="entry name" value="S4"/>
    <property type="match status" value="1"/>
</dbReference>
<dbReference type="PIRSF" id="PIRSF002116">
    <property type="entry name" value="Ribosomal_S4"/>
    <property type="match status" value="1"/>
</dbReference>
<dbReference type="SMART" id="SM00363">
    <property type="entry name" value="S4"/>
    <property type="match status" value="1"/>
</dbReference>
<dbReference type="SUPFAM" id="SSF55174">
    <property type="entry name" value="Alpha-L RNA-binding motif"/>
    <property type="match status" value="1"/>
</dbReference>
<dbReference type="PROSITE" id="PS00528">
    <property type="entry name" value="RIBOSOMAL_S4E"/>
    <property type="match status" value="1"/>
</dbReference>
<dbReference type="PROSITE" id="PS50889">
    <property type="entry name" value="S4"/>
    <property type="match status" value="1"/>
</dbReference>
<organism>
    <name type="scientific">Thermococcus kodakarensis (strain ATCC BAA-918 / JCM 12380 / KOD1)</name>
    <name type="common">Pyrococcus kodakaraensis (strain KOD1)</name>
    <dbReference type="NCBI Taxonomy" id="69014"/>
    <lineage>
        <taxon>Archaea</taxon>
        <taxon>Methanobacteriati</taxon>
        <taxon>Methanobacteriota</taxon>
        <taxon>Thermococci</taxon>
        <taxon>Thermococcales</taxon>
        <taxon>Thermococcaceae</taxon>
        <taxon>Thermococcus</taxon>
    </lineage>
</organism>